<proteinExistence type="inferred from homology"/>
<gene>
    <name evidence="1" type="primary">ybeY</name>
    <name type="ordered locus">Swol_1564</name>
</gene>
<dbReference type="EC" id="3.1.-.-" evidence="1"/>
<dbReference type="EMBL" id="CP000448">
    <property type="protein sequence ID" value="ABI68867.1"/>
    <property type="molecule type" value="Genomic_DNA"/>
</dbReference>
<dbReference type="RefSeq" id="WP_011640966.1">
    <property type="nucleotide sequence ID" value="NC_008346.1"/>
</dbReference>
<dbReference type="SMR" id="Q0AWN7"/>
<dbReference type="STRING" id="335541.Swol_1564"/>
<dbReference type="KEGG" id="swo:Swol_1564"/>
<dbReference type="eggNOG" id="COG0319">
    <property type="taxonomic scope" value="Bacteria"/>
</dbReference>
<dbReference type="HOGENOM" id="CLU_106710_3_0_9"/>
<dbReference type="OrthoDB" id="9807740at2"/>
<dbReference type="Proteomes" id="UP000001968">
    <property type="component" value="Chromosome"/>
</dbReference>
<dbReference type="GO" id="GO:0005737">
    <property type="term" value="C:cytoplasm"/>
    <property type="evidence" value="ECO:0007669"/>
    <property type="project" value="UniProtKB-SubCell"/>
</dbReference>
<dbReference type="GO" id="GO:0004222">
    <property type="term" value="F:metalloendopeptidase activity"/>
    <property type="evidence" value="ECO:0007669"/>
    <property type="project" value="InterPro"/>
</dbReference>
<dbReference type="GO" id="GO:0004521">
    <property type="term" value="F:RNA endonuclease activity"/>
    <property type="evidence" value="ECO:0007669"/>
    <property type="project" value="UniProtKB-UniRule"/>
</dbReference>
<dbReference type="GO" id="GO:0008270">
    <property type="term" value="F:zinc ion binding"/>
    <property type="evidence" value="ECO:0007669"/>
    <property type="project" value="UniProtKB-UniRule"/>
</dbReference>
<dbReference type="GO" id="GO:0006364">
    <property type="term" value="P:rRNA processing"/>
    <property type="evidence" value="ECO:0007669"/>
    <property type="project" value="UniProtKB-UniRule"/>
</dbReference>
<dbReference type="Gene3D" id="3.40.390.30">
    <property type="entry name" value="Metalloproteases ('zincins'), catalytic domain"/>
    <property type="match status" value="1"/>
</dbReference>
<dbReference type="HAMAP" id="MF_00009">
    <property type="entry name" value="Endoribonucl_YbeY"/>
    <property type="match status" value="1"/>
</dbReference>
<dbReference type="InterPro" id="IPR023091">
    <property type="entry name" value="MetalPrtase_cat_dom_sf_prd"/>
</dbReference>
<dbReference type="InterPro" id="IPR002036">
    <property type="entry name" value="YbeY"/>
</dbReference>
<dbReference type="InterPro" id="IPR020549">
    <property type="entry name" value="YbeY_CS"/>
</dbReference>
<dbReference type="NCBIfam" id="TIGR00043">
    <property type="entry name" value="rRNA maturation RNase YbeY"/>
    <property type="match status" value="1"/>
</dbReference>
<dbReference type="PANTHER" id="PTHR46986">
    <property type="entry name" value="ENDORIBONUCLEASE YBEY, CHLOROPLASTIC"/>
    <property type="match status" value="1"/>
</dbReference>
<dbReference type="PANTHER" id="PTHR46986:SF1">
    <property type="entry name" value="ENDORIBONUCLEASE YBEY, CHLOROPLASTIC"/>
    <property type="match status" value="1"/>
</dbReference>
<dbReference type="Pfam" id="PF02130">
    <property type="entry name" value="YbeY"/>
    <property type="match status" value="1"/>
</dbReference>
<dbReference type="SUPFAM" id="SSF55486">
    <property type="entry name" value="Metalloproteases ('zincins'), catalytic domain"/>
    <property type="match status" value="1"/>
</dbReference>
<dbReference type="PROSITE" id="PS01306">
    <property type="entry name" value="UPF0054"/>
    <property type="match status" value="1"/>
</dbReference>
<name>YBEY_SYNWW</name>
<reference key="1">
    <citation type="journal article" date="2010" name="Environ. Microbiol.">
        <title>The genome of Syntrophomonas wolfei: new insights into syntrophic metabolism and biohydrogen production.</title>
        <authorList>
            <person name="Sieber J.R."/>
            <person name="Sims D.R."/>
            <person name="Han C."/>
            <person name="Kim E."/>
            <person name="Lykidis A."/>
            <person name="Lapidus A.L."/>
            <person name="McDonnald E."/>
            <person name="Rohlin L."/>
            <person name="Culley D.E."/>
            <person name="Gunsalus R."/>
            <person name="McInerney M.J."/>
        </authorList>
    </citation>
    <scope>NUCLEOTIDE SEQUENCE [LARGE SCALE GENOMIC DNA]</scope>
    <source>
        <strain>DSM 2245B / Goettingen</strain>
    </source>
</reference>
<keyword id="KW-0963">Cytoplasm</keyword>
<keyword id="KW-0255">Endonuclease</keyword>
<keyword id="KW-0378">Hydrolase</keyword>
<keyword id="KW-0479">Metal-binding</keyword>
<keyword id="KW-0540">Nuclease</keyword>
<keyword id="KW-1185">Reference proteome</keyword>
<keyword id="KW-0690">Ribosome biogenesis</keyword>
<keyword id="KW-0698">rRNA processing</keyword>
<keyword id="KW-0862">Zinc</keyword>
<protein>
    <recommendedName>
        <fullName evidence="1">Endoribonuclease YbeY</fullName>
        <ecNumber evidence="1">3.1.-.-</ecNumber>
    </recommendedName>
</protein>
<sequence length="156" mass="17934">METMIINQQNKINYTKEMQQVILNVANAVAKMVKLSPNTELSVMIVDNSYIKELNLIYRGENNPTDVLSFAMNELSEEEMDLDLPGEVNVLGDIVVSLEKAVSQSEEYGHSAERELGYLIAHGMLHLLGYDHENEEERNLMRNLEERIMHKVKLER</sequence>
<comment type="function">
    <text evidence="1">Single strand-specific metallo-endoribonuclease involved in late-stage 70S ribosome quality control and in maturation of the 3' terminus of the 16S rRNA.</text>
</comment>
<comment type="cofactor">
    <cofactor evidence="1">
        <name>Zn(2+)</name>
        <dbReference type="ChEBI" id="CHEBI:29105"/>
    </cofactor>
    <text evidence="1">Binds 1 zinc ion.</text>
</comment>
<comment type="subcellular location">
    <subcellularLocation>
        <location evidence="1">Cytoplasm</location>
    </subcellularLocation>
</comment>
<comment type="similarity">
    <text evidence="1">Belongs to the endoribonuclease YbeY family.</text>
</comment>
<accession>Q0AWN7</accession>
<feature type="chain" id="PRO_0000284339" description="Endoribonuclease YbeY">
    <location>
        <begin position="1"/>
        <end position="156"/>
    </location>
</feature>
<feature type="binding site" evidence="1">
    <location>
        <position position="122"/>
    </location>
    <ligand>
        <name>Zn(2+)</name>
        <dbReference type="ChEBI" id="CHEBI:29105"/>
        <note>catalytic</note>
    </ligand>
</feature>
<feature type="binding site" evidence="1">
    <location>
        <position position="126"/>
    </location>
    <ligand>
        <name>Zn(2+)</name>
        <dbReference type="ChEBI" id="CHEBI:29105"/>
        <note>catalytic</note>
    </ligand>
</feature>
<feature type="binding site" evidence="1">
    <location>
        <position position="132"/>
    </location>
    <ligand>
        <name>Zn(2+)</name>
        <dbReference type="ChEBI" id="CHEBI:29105"/>
        <note>catalytic</note>
    </ligand>
</feature>
<evidence type="ECO:0000255" key="1">
    <source>
        <dbReference type="HAMAP-Rule" id="MF_00009"/>
    </source>
</evidence>
<organism>
    <name type="scientific">Syntrophomonas wolfei subsp. wolfei (strain DSM 2245B / Goettingen)</name>
    <dbReference type="NCBI Taxonomy" id="335541"/>
    <lineage>
        <taxon>Bacteria</taxon>
        <taxon>Bacillati</taxon>
        <taxon>Bacillota</taxon>
        <taxon>Clostridia</taxon>
        <taxon>Eubacteriales</taxon>
        <taxon>Syntrophomonadaceae</taxon>
        <taxon>Syntrophomonas</taxon>
    </lineage>
</organism>